<protein>
    <recommendedName>
        <fullName evidence="2">Inner tegument protein</fullName>
    </recommendedName>
</protein>
<evidence type="ECO:0000250" key="1">
    <source>
        <dbReference type="UniProtKB" id="P10221"/>
    </source>
</evidence>
<evidence type="ECO:0000255" key="2">
    <source>
        <dbReference type="HAMAP-Rule" id="MF_04043"/>
    </source>
</evidence>
<feature type="chain" id="PRO_0000423836" description="Inner tegument protein">
    <location>
        <begin position="1"/>
        <end position="928"/>
    </location>
</feature>
<feature type="region of interest" description="Interaction with large tegument protein" evidence="1">
    <location>
        <begin position="482"/>
        <end position="928"/>
    </location>
</feature>
<dbReference type="EMBL" id="AF148805">
    <property type="protein sequence ID" value="ABD28918.1"/>
    <property type="molecule type" value="Genomic_DNA"/>
</dbReference>
<dbReference type="RefSeq" id="YP_001129420.1">
    <property type="nucleotide sequence ID" value="NC_009333.1"/>
</dbReference>
<dbReference type="BioGRID" id="1776969">
    <property type="interactions" value="1"/>
</dbReference>
<dbReference type="DNASU" id="4961466"/>
<dbReference type="GeneID" id="4961466"/>
<dbReference type="KEGG" id="vg:4961466"/>
<dbReference type="Proteomes" id="UP000000942">
    <property type="component" value="Segment"/>
</dbReference>
<dbReference type="GO" id="GO:0044177">
    <property type="term" value="C:host cell Golgi apparatus"/>
    <property type="evidence" value="ECO:0007669"/>
    <property type="project" value="UniProtKB-SubCell"/>
</dbReference>
<dbReference type="GO" id="GO:0042025">
    <property type="term" value="C:host cell nucleus"/>
    <property type="evidence" value="ECO:0007669"/>
    <property type="project" value="UniProtKB-SubCell"/>
</dbReference>
<dbReference type="GO" id="GO:0019033">
    <property type="term" value="C:viral tegument"/>
    <property type="evidence" value="ECO:0007669"/>
    <property type="project" value="UniProtKB-SubCell"/>
</dbReference>
<dbReference type="GO" id="GO:0019068">
    <property type="term" value="P:virion assembly"/>
    <property type="evidence" value="ECO:0007669"/>
    <property type="project" value="InterPro"/>
</dbReference>
<dbReference type="HAMAP" id="MF_04043">
    <property type="entry name" value="HSV_ITP"/>
    <property type="match status" value="1"/>
</dbReference>
<dbReference type="InterPro" id="IPR007611">
    <property type="entry name" value="Herpes_U30"/>
</dbReference>
<dbReference type="InterPro" id="IPR034738">
    <property type="entry name" value="HSV_ITP"/>
</dbReference>
<dbReference type="Pfam" id="PF04523">
    <property type="entry name" value="Herpes_U30"/>
    <property type="match status" value="1"/>
</dbReference>
<reference key="1">
    <citation type="journal article" date="1999" name="J. Virol.">
        <title>Identification of a spliced gene from Kaposi's sarcoma-associated herpesvirus encoding a protein with similarities to latent membrane proteins 1 and 2A of Epstein-Barr virus.</title>
        <authorList>
            <person name="Glenn M."/>
            <person name="Rainbow L."/>
            <person name="Aurade F."/>
            <person name="Davison A."/>
            <person name="Schulz T.F."/>
        </authorList>
    </citation>
    <scope>NUCLEOTIDE SEQUENCE [LARGE SCALE GENOMIC DNA]</scope>
</reference>
<reference key="2">
    <citation type="journal article" date="2006" name="J. Gen. Virol.">
        <title>Kaposi's sarcoma-associated herpesvirus immune modulation: an overview.</title>
        <authorList>
            <person name="Rezaee S.A.R."/>
            <person name="Cunningham C."/>
            <person name="Davison A.J."/>
            <person name="Blackbourn D.J."/>
        </authorList>
    </citation>
    <scope>NUCLEOTIDE SEQUENCE [LARGE SCALE GENOMIC DNA]</scope>
</reference>
<gene>
    <name type="primary">ORF63</name>
</gene>
<proteinExistence type="inferred from homology"/>
<keyword id="KW-1035">Host cytoplasm</keyword>
<keyword id="KW-1040">Host Golgi apparatus</keyword>
<keyword id="KW-1048">Host nucleus</keyword>
<keyword id="KW-1185">Reference proteome</keyword>
<keyword id="KW-0946">Virion</keyword>
<keyword id="KW-0920">Virion tegument</keyword>
<organismHost>
    <name type="scientific">Homo sapiens</name>
    <name type="common">Human</name>
    <dbReference type="NCBI Taxonomy" id="9606"/>
</organismHost>
<accession>F5HEU7</accession>
<name>ITP_HHV8P</name>
<sequence>MDGTDALEKLTKGLSGGGGSLHQTKLLMEFQLRGLPVPALLNSSTTEQFLNTVAQLPTDLSKFIRDYRVFALVRAAYFLEPPSSIDPLEAARALGRLVDILSSQPPQNTAPAQPPTSDDTLNNCTLLKLLAHYADQIAGFKTPALPPVPPGIIGLFTCVEQMYHACFQKYWAAALPPMWILTYDPPTSPLQDWLIVAYGNKEGLLLPSGIPSEEVLAKTLVTEHHELFVSRSNSTETAVTMPVSKERALAIYRVFAKGEVVAENTPILAFTDVELSTLKPHYLFIYDFIIEALCKSYTYSCTQARLESFLSRGIDFMTDLGQYLDTATSGKQQLTHSQIKEIKYRLLSCGLSASACDVFRTVIMTLPYRPTPNLANLSTFMGMVHQLTMFGHYFYRCLGSYSPTGLAFTELQKILTRASAEQTERNPWRHPGISDIPLRWKISRALAFFVPPAPINTLQRVYAALPSQLMRAIFEISVKTTWGGAVPANLARDIDTGPNTQHISSTPPPTLKDVETYCQGLRVGDTEYDEDIVRSPLFADAFTKSHLLPILREVLENRLQKNRALFQIRWLIIFAAEAATGLIPARRPLARAYFHIMDILEERHSQDALYNLLDCIQELFTHIRQAVPDAQCPHAFLQSLFVFQFRPFVLKHQQGVTLFLDGLQTSLPPVISLANLGDKLCRLEFEYDSEGDFVRVPVAPPEQPPHVHLSHFKKTIQTIEQATREATVAMTTIAKPIYPAYIRLLQRLEYLNRLNHHILRIPFPQDALSELQETYLAAFARLTKLAADAANTCSYSLTKYFGVLFQHQLVPTAIVKKLLHFDEAKDTTEAFLQSLAQPVVQGQRQGAAGGSGVLTQKELELLNKINPQFTDAQANIPPSIKRSYSNKYDVPEVSVDWETYSRSAFEAPDDELRFVPLTLAGLRKLFVE</sequence>
<organism>
    <name type="scientific">Human herpesvirus 8 type P (isolate GK18)</name>
    <name type="common">HHV-8</name>
    <name type="synonym">Kaposi's sarcoma-associated herpesvirus</name>
    <dbReference type="NCBI Taxonomy" id="868565"/>
    <lineage>
        <taxon>Viruses</taxon>
        <taxon>Duplodnaviria</taxon>
        <taxon>Heunggongvirae</taxon>
        <taxon>Peploviricota</taxon>
        <taxon>Herviviricetes</taxon>
        <taxon>Herpesvirales</taxon>
        <taxon>Orthoherpesviridae</taxon>
        <taxon>Gammaherpesvirinae</taxon>
        <taxon>Rhadinovirus</taxon>
        <taxon>Rhadinovirus humangamma8</taxon>
        <taxon>Human herpesvirus 8</taxon>
    </lineage>
</organism>
<comment type="function">
    <text evidence="2">Plays an essential role in cytoplasmic secondary envelopment during viral egress. Interacts with the capsid via the large tegument protein/LTP and participates in its transport to the host trans-Golgi network (TGN) where secondary envelopment occurs. Modulates tegumentation and capsid accumulation at the viral assembly complex.</text>
</comment>
<comment type="subunit">
    <text evidence="2">Interacts (via C-terminus) with the large tegument protein/LTP (via N-terminus).</text>
</comment>
<comment type="subcellular location">
    <subcellularLocation>
        <location evidence="2">Virion tegument</location>
    </subcellularLocation>
    <subcellularLocation>
        <location evidence="2">Host cytoplasm</location>
    </subcellularLocation>
    <subcellularLocation>
        <location evidence="2">Host nucleus</location>
    </subcellularLocation>
    <subcellularLocation>
        <location evidence="2">Host Golgi apparatus</location>
        <location evidence="2">Host trans-Golgi network</location>
    </subcellularLocation>
</comment>
<comment type="similarity">
    <text evidence="2">Belongs to the herpesviridae inner tegument protein family.</text>
</comment>